<sequence length="139" mass="15900">MANARSGVAVNDECMLKFGELQSKRLHRFITFKMDDKFKEIVVDQVGDRATSYDDFTNSLPENDCRYAIYDFDFVTAEDVQKSRIFYILWSPSSAKVKSKMLYASSNQKFKSGLNGIQVELQATDASEISLDEIKDRAR</sequence>
<comment type="function">
    <text>Actin-depolymerizing protein. Severs actin filaments (F-actin) and binds to actin monomers.</text>
</comment>
<comment type="subcellular location">
    <subcellularLocation>
        <location>Cytoplasm</location>
    </subcellularLocation>
    <text>As root hairs emerges and the microfilament bundles redirect to the outgrowth ADF3 concentrates at the tip of the emerging hair and remains in this position as elongation proceeds.</text>
</comment>
<comment type="tissue specificity">
    <text>Expressed in all tissues except pollen.</text>
</comment>
<comment type="similarity">
    <text evidence="2">Belongs to the actin-binding proteins ADF family.</text>
</comment>
<dbReference type="EMBL" id="X97726">
    <property type="protein sequence ID" value="CAA66311.1"/>
    <property type="molecule type" value="mRNA"/>
</dbReference>
<dbReference type="PIR" id="T02914">
    <property type="entry name" value="T02914"/>
</dbReference>
<dbReference type="RefSeq" id="NP_001105474.1">
    <property type="nucleotide sequence ID" value="NM_001112004.1"/>
</dbReference>
<dbReference type="SMR" id="Q41764"/>
<dbReference type="FunCoup" id="Q41764">
    <property type="interactions" value="2582"/>
</dbReference>
<dbReference type="STRING" id="4577.Q41764"/>
<dbReference type="iPTMnet" id="Q41764"/>
<dbReference type="PaxDb" id="4577-GRMZM2G060702_P02"/>
<dbReference type="EnsemblPlants" id="Zm00001eb062600_T001">
    <property type="protein sequence ID" value="Zm00001eb062600_P001"/>
    <property type="gene ID" value="Zm00001eb062600"/>
</dbReference>
<dbReference type="Gramene" id="Zm00001eb062600_T001">
    <property type="protein sequence ID" value="Zm00001eb062600_P001"/>
    <property type="gene ID" value="Zm00001eb062600"/>
</dbReference>
<dbReference type="eggNOG" id="KOG1735">
    <property type="taxonomic scope" value="Eukaryota"/>
</dbReference>
<dbReference type="InParanoid" id="Q41764"/>
<dbReference type="OMA" id="YLTRQMS"/>
<dbReference type="OrthoDB" id="10249245at2759"/>
<dbReference type="Proteomes" id="UP000007305">
    <property type="component" value="Chromosome 1"/>
</dbReference>
<dbReference type="ExpressionAtlas" id="Q41764">
    <property type="expression patterns" value="baseline and differential"/>
</dbReference>
<dbReference type="GO" id="GO:0015629">
    <property type="term" value="C:actin cytoskeleton"/>
    <property type="evidence" value="ECO:0000318"/>
    <property type="project" value="GO_Central"/>
</dbReference>
<dbReference type="GO" id="GO:0005737">
    <property type="term" value="C:cytoplasm"/>
    <property type="evidence" value="ECO:0000318"/>
    <property type="project" value="GO_Central"/>
</dbReference>
<dbReference type="GO" id="GO:0051015">
    <property type="term" value="F:actin filament binding"/>
    <property type="evidence" value="ECO:0000318"/>
    <property type="project" value="GO_Central"/>
</dbReference>
<dbReference type="GO" id="GO:0030042">
    <property type="term" value="P:actin filament depolymerization"/>
    <property type="evidence" value="ECO:0000318"/>
    <property type="project" value="GO_Central"/>
</dbReference>
<dbReference type="CDD" id="cd11286">
    <property type="entry name" value="ADF_cofilin_like"/>
    <property type="match status" value="1"/>
</dbReference>
<dbReference type="Gene3D" id="3.40.20.10">
    <property type="entry name" value="Severin"/>
    <property type="match status" value="1"/>
</dbReference>
<dbReference type="InterPro" id="IPR002108">
    <property type="entry name" value="ADF-H"/>
</dbReference>
<dbReference type="InterPro" id="IPR029006">
    <property type="entry name" value="ADF-H/Gelsolin-like_dom_sf"/>
</dbReference>
<dbReference type="InterPro" id="IPR017904">
    <property type="entry name" value="ADF/Cofilin"/>
</dbReference>
<dbReference type="PANTHER" id="PTHR11913">
    <property type="entry name" value="COFILIN-RELATED"/>
    <property type="match status" value="1"/>
</dbReference>
<dbReference type="Pfam" id="PF00241">
    <property type="entry name" value="Cofilin_ADF"/>
    <property type="match status" value="1"/>
</dbReference>
<dbReference type="SMART" id="SM00102">
    <property type="entry name" value="ADF"/>
    <property type="match status" value="1"/>
</dbReference>
<dbReference type="SUPFAM" id="SSF55753">
    <property type="entry name" value="Actin depolymerizing proteins"/>
    <property type="match status" value="1"/>
</dbReference>
<dbReference type="PROSITE" id="PS51263">
    <property type="entry name" value="ADF_H"/>
    <property type="match status" value="1"/>
</dbReference>
<gene>
    <name type="primary">ADF3</name>
    <name type="synonym">ABP3</name>
</gene>
<accession>Q41764</accession>
<evidence type="ECO:0000255" key="1">
    <source>
        <dbReference type="PROSITE-ProRule" id="PRU00599"/>
    </source>
</evidence>
<evidence type="ECO:0000305" key="2"/>
<reference key="1">
    <citation type="journal article" date="1996" name="Proc. Natl. Acad. Sci. U.S.A.">
        <title>Pollen specific expression of maize genes encoding actin depolymerizing factor-like proteins.</title>
        <authorList>
            <person name="Lopez I."/>
            <person name="Anthony R.G."/>
            <person name="Maciver S.K."/>
            <person name="Jiang C.J."/>
            <person name="Khan S."/>
            <person name="Weeds A.G."/>
            <person name="Hussey P.J."/>
        </authorList>
    </citation>
    <scope>NUCLEOTIDE SEQUENCE [MRNA]</scope>
    <scope>CHARACTERIZATION</scope>
    <source>
        <tissue>Leaf</tissue>
    </source>
</reference>
<reference key="2">
    <citation type="journal article" date="1997" name="Plant J.">
        <title>The maize actin-depolymerizing factor, ZmADF3, redistributes to the growing tip of elongating root hairs and can be induced to translocate into the nucleus with actin.</title>
        <authorList>
            <person name="Jiang C.J."/>
            <person name="Weeds A.G."/>
            <person name="Hussey P.J."/>
        </authorList>
    </citation>
    <scope>CHARACTERIZATION</scope>
</reference>
<organism>
    <name type="scientific">Zea mays</name>
    <name type="common">Maize</name>
    <dbReference type="NCBI Taxonomy" id="4577"/>
    <lineage>
        <taxon>Eukaryota</taxon>
        <taxon>Viridiplantae</taxon>
        <taxon>Streptophyta</taxon>
        <taxon>Embryophyta</taxon>
        <taxon>Tracheophyta</taxon>
        <taxon>Spermatophyta</taxon>
        <taxon>Magnoliopsida</taxon>
        <taxon>Liliopsida</taxon>
        <taxon>Poales</taxon>
        <taxon>Poaceae</taxon>
        <taxon>PACMAD clade</taxon>
        <taxon>Panicoideae</taxon>
        <taxon>Andropogonodae</taxon>
        <taxon>Andropogoneae</taxon>
        <taxon>Tripsacinae</taxon>
        <taxon>Zea</taxon>
    </lineage>
</organism>
<feature type="chain" id="PRO_0000214934" description="Actin-depolymerizing factor 3">
    <location>
        <begin position="1"/>
        <end position="139"/>
    </location>
</feature>
<feature type="domain" description="ADF-H" evidence="1">
    <location>
        <begin position="7"/>
        <end position="139"/>
    </location>
</feature>
<protein>
    <recommendedName>
        <fullName>Actin-depolymerizing factor 3</fullName>
        <shortName>ADF-3</shortName>
        <shortName>ZmADF3</shortName>
    </recommendedName>
    <alternativeName>
        <fullName>ZmABP3</fullName>
    </alternativeName>
</protein>
<proteinExistence type="evidence at protein level"/>
<name>ADF3_MAIZE</name>
<keyword id="KW-0009">Actin-binding</keyword>
<keyword id="KW-0963">Cytoplasm</keyword>
<keyword id="KW-1185">Reference proteome</keyword>